<evidence type="ECO:0000250" key="1">
    <source>
        <dbReference type="UniProtKB" id="P53045"/>
    </source>
</evidence>
<evidence type="ECO:0000250" key="2">
    <source>
        <dbReference type="UniProtKB" id="Q4WIX5"/>
    </source>
</evidence>
<evidence type="ECO:0000255" key="3"/>
<evidence type="ECO:0000269" key="4">
    <source>
    </source>
</evidence>
<evidence type="ECO:0000269" key="5">
    <source>
    </source>
</evidence>
<evidence type="ECO:0000303" key="6">
    <source>
    </source>
</evidence>
<evidence type="ECO:0000305" key="7"/>
<evidence type="ECO:0000305" key="8">
    <source>
    </source>
</evidence>
<name>ERG3B_GIBZE</name>
<gene>
    <name evidence="6" type="primary">ERG3B</name>
    <name type="ORF">FG04994</name>
    <name type="ORF">FGRAMPH1_01T16829</name>
</gene>
<comment type="function">
    <text evidence="2 5 8">C-5 sterol desaturase; part of the third module of ergosterol biosynthesis pathway that includes the late steps of the pathway (PubMed:24785759). ERG3A and ERG3BB catalyze the introduction of a C-5 double bond in the B ring to produce 5-dehydroepisterol (By similarity). The third module or late pathway involves the ergosterol synthesis itself through consecutive reactions that mainly occur in the endoplasmic reticulum (ER) membrane. Firstly, the squalene synthase ERG9 catalyzes the condensation of 2 farnesyl pyrophosphate moieties to form squalene, which is the precursor of all steroids. Squalene synthase is crucial for balancing the incorporation of farnesyl diphosphate (FPP) into sterol and nonsterol isoprene synthesis. Secondly, squalene is converted into lanosterol by the consecutive action of the squalene epoxidase ERG1 and the lanosterol synthase ERG7. Then, the delta(24)-sterol C-methyltransferase ERG6 methylates lanosterol at C-24 to produce eburicol. Eburicol is the substrate of the sterol 14-alpha demethylase encoded by CYP51A, CYP51B and CYP51C, to yield 4,4,24-trimethyl ergosta-8,14,24(28)-trienol. CYP51B encodes the enzyme primarily responsible for sterol 14-alpha-demethylation, and plays an essential role in ascospore formation. CYP51A encodes an additional sterol 14-alpha-demethylase, induced on ergosterol depletion and responsible for the intrinsic variation in azole sensitivity. The third CYP51 isoform, CYP51C, does not encode a sterol 14-alpha-demethylase, but is required for full virulence on host wheat ears. The C-14 reductase ERG24 then reduces the C14=C15 double bond which leads to 4,4-dimethylfecosterol. A sequence of further demethylations at C-4, involving the C-4 demethylation complex containing the C-4 methylsterol oxidases ERG25, the sterol-4-alpha-carboxylate 3-dehydrogenase ERG26 and the 3-keto-steroid reductase ERG27, leads to the production of fecosterol via 4-methylfecosterol. ERG28 has a role as a scaffold to help anchor ERG25, ERG26 and ERG27 to the endoplasmic reticulum. The C-8 sterol isomerase ERG2 then catalyzes the reaction which results in unsaturation at C-7 in the B ring of sterols and thus converts fecosterol to episterol. The sterol-C5-desaturases ERG3A and ERG3BB then catalyze the introduction of a C-5 double bond in the B ring to produce 5-dehydroepisterol. The C-22 sterol desaturases ERG5A and ERG5B further convert 5-dehydroepisterol into ergosta-5,7,22,24(28)-tetraen-3beta-ol by forming the C-22(23) double bond in the sterol side chain. Finally, ergosta-5,7,22,24(28)-tetraen-3beta-ol is substrate of the C-24(28) sterol reductase ERG4 to produce ergosterol (Probable).</text>
</comment>
<comment type="catalytic activity">
    <reaction evidence="8">
        <text>episterol + 2 Fe(II)-[cytochrome b5] + O2 + 2 H(+) = 5-dehydroepisterol + 2 Fe(III)-[cytochrome b5] + 2 H2O</text>
        <dbReference type="Rhea" id="RHEA:46560"/>
        <dbReference type="Rhea" id="RHEA-COMP:10438"/>
        <dbReference type="Rhea" id="RHEA-COMP:10439"/>
        <dbReference type="ChEBI" id="CHEBI:15377"/>
        <dbReference type="ChEBI" id="CHEBI:15378"/>
        <dbReference type="ChEBI" id="CHEBI:15379"/>
        <dbReference type="ChEBI" id="CHEBI:23929"/>
        <dbReference type="ChEBI" id="CHEBI:29033"/>
        <dbReference type="ChEBI" id="CHEBI:29034"/>
        <dbReference type="ChEBI" id="CHEBI:52972"/>
        <dbReference type="EC" id="1.14.19.20"/>
    </reaction>
    <physiologicalReaction direction="left-to-right" evidence="8">
        <dbReference type="Rhea" id="RHEA:46561"/>
    </physiologicalReaction>
</comment>
<comment type="pathway">
    <text evidence="8">Steroid metabolism; ergosterol biosynthesis.</text>
</comment>
<comment type="subcellular location">
    <subcellularLocation>
        <location evidence="7">Endoplasmic reticulum membrane</location>
        <topology evidence="3">Multi-pass membrane protein</topology>
    </subcellularLocation>
</comment>
<comment type="domain">
    <text evidence="1">The histidine box domains may contain the active site and/or be involved in metal ion binding.</text>
</comment>
<comment type="disruption phenotype">
    <text evidence="4 5">Leads to a severe decrease in ergosterol production and virulence when ERG3A is also deleted (PubMed:23442154). Results in increased production of deoxynivalenol (DON) (PubMed:24785759).</text>
</comment>
<comment type="miscellaneous">
    <text evidence="4">In Fusarium, the biosynthesis pathway of the sterol precursors leading to the prevalent sterol ergosterol differs from yeast. The ringsystem of lanosterol in S.cerevisiae is firstly demethylised in three enzymatic steps leading to the intermediate zymosterol and secondly a methyl group is added to zymosterol by the sterol 24-C-methyltransferase to form fecosterol. In Fusarium, lanosterol is firstly transmethylated by the sterol 24-C-methyltransferase leading to the intermediate eburicol and secondly demethylated in three steps to form fecosterol.</text>
</comment>
<comment type="similarity">
    <text evidence="7">Belongs to the sterol desaturase family.</text>
</comment>
<feature type="chain" id="PRO_0000454362" description="Delta(7)-sterol 5(6)-desaturase ERG3B">
    <location>
        <begin position="1"/>
        <end position="323"/>
    </location>
</feature>
<feature type="transmembrane region" description="Helical" evidence="3">
    <location>
        <begin position="67"/>
        <end position="87"/>
    </location>
</feature>
<feature type="transmembrane region" description="Helical" evidence="3">
    <location>
        <begin position="112"/>
        <end position="132"/>
    </location>
</feature>
<feature type="transmembrane region" description="Helical" evidence="3">
    <location>
        <begin position="150"/>
        <end position="170"/>
    </location>
</feature>
<feature type="domain" description="Fatty acid hydroxylase" evidence="3">
    <location>
        <begin position="157"/>
        <end position="285"/>
    </location>
</feature>
<feature type="short sequence motif" description="Histidine box-1" evidence="1">
    <location>
        <begin position="171"/>
        <end position="175"/>
    </location>
</feature>
<feature type="short sequence motif" description="Histidine box-2" evidence="1">
    <location>
        <begin position="184"/>
        <end position="188"/>
    </location>
</feature>
<feature type="short sequence motif" description="Histidine box-3" evidence="1">
    <location>
        <begin position="262"/>
        <end position="266"/>
    </location>
</feature>
<reference key="1">
    <citation type="journal article" date="2007" name="Science">
        <title>The Fusarium graminearum genome reveals a link between localized polymorphism and pathogen specialization.</title>
        <authorList>
            <person name="Cuomo C.A."/>
            <person name="Gueldener U."/>
            <person name="Xu J.-R."/>
            <person name="Trail F."/>
            <person name="Turgeon B.G."/>
            <person name="Di Pietro A."/>
            <person name="Walton J.D."/>
            <person name="Ma L.-J."/>
            <person name="Baker S.E."/>
            <person name="Rep M."/>
            <person name="Adam G."/>
            <person name="Antoniw J."/>
            <person name="Baldwin T."/>
            <person name="Calvo S.E."/>
            <person name="Chang Y.-L."/>
            <person name="DeCaprio D."/>
            <person name="Gale L.R."/>
            <person name="Gnerre S."/>
            <person name="Goswami R.S."/>
            <person name="Hammond-Kosack K."/>
            <person name="Harris L.J."/>
            <person name="Hilburn K."/>
            <person name="Kennell J.C."/>
            <person name="Kroken S."/>
            <person name="Magnuson J.K."/>
            <person name="Mannhaupt G."/>
            <person name="Mauceli E.W."/>
            <person name="Mewes H.-W."/>
            <person name="Mitterbauer R."/>
            <person name="Muehlbauer G."/>
            <person name="Muensterkoetter M."/>
            <person name="Nelson D."/>
            <person name="O'Donnell K."/>
            <person name="Ouellet T."/>
            <person name="Qi W."/>
            <person name="Quesneville H."/>
            <person name="Roncero M.I.G."/>
            <person name="Seong K.-Y."/>
            <person name="Tetko I.V."/>
            <person name="Urban M."/>
            <person name="Waalwijk C."/>
            <person name="Ward T.J."/>
            <person name="Yao J."/>
            <person name="Birren B.W."/>
            <person name="Kistler H.C."/>
        </authorList>
    </citation>
    <scope>NUCLEOTIDE SEQUENCE [LARGE SCALE GENOMIC DNA]</scope>
    <source>
        <strain>ATCC MYA-4620 / CBS 123657 / FGSC 9075 / NRRL 31084 / PH-1</strain>
    </source>
</reference>
<reference key="2">
    <citation type="journal article" date="2010" name="Nature">
        <title>Comparative genomics reveals mobile pathogenicity chromosomes in Fusarium.</title>
        <authorList>
            <person name="Ma L.-J."/>
            <person name="van der Does H.C."/>
            <person name="Borkovich K.A."/>
            <person name="Coleman J.J."/>
            <person name="Daboussi M.-J."/>
            <person name="Di Pietro A."/>
            <person name="Dufresne M."/>
            <person name="Freitag M."/>
            <person name="Grabherr M."/>
            <person name="Henrissat B."/>
            <person name="Houterman P.M."/>
            <person name="Kang S."/>
            <person name="Shim W.-B."/>
            <person name="Woloshuk C."/>
            <person name="Xie X."/>
            <person name="Xu J.-R."/>
            <person name="Antoniw J."/>
            <person name="Baker S.E."/>
            <person name="Bluhm B.H."/>
            <person name="Breakspear A."/>
            <person name="Brown D.W."/>
            <person name="Butchko R.A.E."/>
            <person name="Chapman S."/>
            <person name="Coulson R."/>
            <person name="Coutinho P.M."/>
            <person name="Danchin E.G.J."/>
            <person name="Diener A."/>
            <person name="Gale L.R."/>
            <person name="Gardiner D.M."/>
            <person name="Goff S."/>
            <person name="Hammond-Kosack K.E."/>
            <person name="Hilburn K."/>
            <person name="Hua-Van A."/>
            <person name="Jonkers W."/>
            <person name="Kazan K."/>
            <person name="Kodira C.D."/>
            <person name="Koehrsen M."/>
            <person name="Kumar L."/>
            <person name="Lee Y.-H."/>
            <person name="Li L."/>
            <person name="Manners J.M."/>
            <person name="Miranda-Saavedra D."/>
            <person name="Mukherjee M."/>
            <person name="Park G."/>
            <person name="Park J."/>
            <person name="Park S.-Y."/>
            <person name="Proctor R.H."/>
            <person name="Regev A."/>
            <person name="Ruiz-Roldan M.C."/>
            <person name="Sain D."/>
            <person name="Sakthikumar S."/>
            <person name="Sykes S."/>
            <person name="Schwartz D.C."/>
            <person name="Turgeon B.G."/>
            <person name="Wapinski I."/>
            <person name="Yoder O."/>
            <person name="Young S."/>
            <person name="Zeng Q."/>
            <person name="Zhou S."/>
            <person name="Galagan J."/>
            <person name="Cuomo C.A."/>
            <person name="Kistler H.C."/>
            <person name="Rep M."/>
        </authorList>
    </citation>
    <scope>GENOME REANNOTATION</scope>
    <source>
        <strain>ATCC MYA-4620 / CBS 123657 / FGSC 9075 / NRRL 31084 / PH-1</strain>
    </source>
</reference>
<reference key="3">
    <citation type="journal article" date="2015" name="BMC Genomics">
        <title>The completed genome sequence of the pathogenic ascomycete fungus Fusarium graminearum.</title>
        <authorList>
            <person name="King R."/>
            <person name="Urban M."/>
            <person name="Hammond-Kosack M.C.U."/>
            <person name="Hassani-Pak K."/>
            <person name="Hammond-Kosack K.E."/>
        </authorList>
    </citation>
    <scope>NUCLEOTIDE SEQUENCE [LARGE SCALE GENOMIC DNA]</scope>
    <source>
        <strain>ATCC MYA-4620 / CBS 123657 / FGSC 9075 / NRRL 31084 / PH-1</strain>
    </source>
</reference>
<reference key="4">
    <citation type="journal article" date="2013" name="New Phytol.">
        <title>Characterization of the sterol 14alpha-demethylases of Fusarium graminearum identifies a novel genus-specific CYP51 function.</title>
        <authorList>
            <person name="Fan J."/>
            <person name="Urban M."/>
            <person name="Parker J.E."/>
            <person name="Brewer H.C."/>
            <person name="Kelly S.L."/>
            <person name="Hammond-Kosack K.E."/>
            <person name="Fraaije B.A."/>
            <person name="Liu X."/>
            <person name="Cools H.J."/>
        </authorList>
    </citation>
    <scope>INDUCTION</scope>
    <scope>DISRUPTION PHENOTYPE</scope>
    <scope>PATHWAY</scope>
</reference>
<reference key="5">
    <citation type="journal article" date="2014" name="Fungal Genet. Biol.">
        <title>Functional characterization of FgERG3 and FgERG5 associated with ergosterol biosynthesis, vegetative differentiation and virulence of Fusarium graminearum.</title>
        <authorList>
            <person name="Yun Y."/>
            <person name="Yin D."/>
            <person name="Dawood D.H."/>
            <person name="Liu X."/>
            <person name="Chen Y."/>
            <person name="Ma Z."/>
        </authorList>
    </citation>
    <scope>FUNCTION</scope>
    <scope>DISRUPTION PHENOTYPE</scope>
</reference>
<accession>A0A0E0SNE8</accession>
<sequence>MDAILEILDPYVFDYGYAYLFPQQTTQPSYGNSTGFAPSSASKNFDDEYSLNFGSSLPRDDIYRQSASILMIAGFGAAFIYVISAALSYYFVFDRRLEHHPRFLKNQIKQEIQSSFFAIPIIDLLTLPFFLGEVRGHSLLYTNIDEYGWSWLAISTILYMVFNDLGIYWIHRLEHHPSIYKYVHKPHHKWIVPTPWAAIAFHPVDGYVQSVPYHVFVYLCPMQKHLYMFLFVCVQIWTILIHDGDMITGHWLERFINSPAHHTLHHMYFTCNYGQYFTWADNYWGSHRAPMPELDPIHEAIRVMQEKGLADKDGNPIEKSKSE</sequence>
<keyword id="KW-0256">Endoplasmic reticulum</keyword>
<keyword id="KW-0444">Lipid biosynthesis</keyword>
<keyword id="KW-0443">Lipid metabolism</keyword>
<keyword id="KW-0472">Membrane</keyword>
<keyword id="KW-0560">Oxidoreductase</keyword>
<keyword id="KW-1185">Reference proteome</keyword>
<keyword id="KW-0752">Steroid biosynthesis</keyword>
<keyword id="KW-0753">Steroid metabolism</keyword>
<keyword id="KW-0756">Sterol biosynthesis</keyword>
<keyword id="KW-1207">Sterol metabolism</keyword>
<keyword id="KW-0812">Transmembrane</keyword>
<keyword id="KW-1133">Transmembrane helix</keyword>
<organism>
    <name type="scientific">Gibberella zeae (strain ATCC MYA-4620 / CBS 123657 / FGSC 9075 / NRRL 31084 / PH-1)</name>
    <name type="common">Wheat head blight fungus</name>
    <name type="synonym">Fusarium graminearum</name>
    <dbReference type="NCBI Taxonomy" id="229533"/>
    <lineage>
        <taxon>Eukaryota</taxon>
        <taxon>Fungi</taxon>
        <taxon>Dikarya</taxon>
        <taxon>Ascomycota</taxon>
        <taxon>Pezizomycotina</taxon>
        <taxon>Sordariomycetes</taxon>
        <taxon>Hypocreomycetidae</taxon>
        <taxon>Hypocreales</taxon>
        <taxon>Nectriaceae</taxon>
        <taxon>Fusarium</taxon>
    </lineage>
</organism>
<protein>
    <recommendedName>
        <fullName evidence="7">Delta(7)-sterol 5(6)-desaturase ERG3B</fullName>
        <ecNumber evidence="8">1.14.19.20</ecNumber>
    </recommendedName>
    <alternativeName>
        <fullName evidence="6">C-5 sterol desaturase ERG3B</fullName>
    </alternativeName>
    <alternativeName>
        <fullName evidence="6">Ergosterol Delta(5,6) desaturase ERG3B</fullName>
    </alternativeName>
    <alternativeName>
        <fullName evidence="6">Ergosterol biosynthetic protein 3B</fullName>
    </alternativeName>
</protein>
<dbReference type="EC" id="1.14.19.20" evidence="8"/>
<dbReference type="EMBL" id="HG970334">
    <property type="protein sequence ID" value="CEF87961.1"/>
    <property type="molecule type" value="Genomic_DNA"/>
</dbReference>
<dbReference type="STRING" id="229533.A0A0E0SNE8"/>
<dbReference type="VEuPathDB" id="FungiDB:FGRAMPH1_01G16829"/>
<dbReference type="eggNOG" id="KOG0872">
    <property type="taxonomic scope" value="Eukaryota"/>
</dbReference>
<dbReference type="InParanoid" id="A0A0E0SNE8"/>
<dbReference type="UniPathway" id="UPA00768"/>
<dbReference type="Proteomes" id="UP000070720">
    <property type="component" value="Chromosome 3"/>
</dbReference>
<dbReference type="GO" id="GO:0005789">
    <property type="term" value="C:endoplasmic reticulum membrane"/>
    <property type="evidence" value="ECO:0007669"/>
    <property type="project" value="UniProtKB-SubCell"/>
</dbReference>
<dbReference type="GO" id="GO:0005506">
    <property type="term" value="F:iron ion binding"/>
    <property type="evidence" value="ECO:0007669"/>
    <property type="project" value="InterPro"/>
</dbReference>
<dbReference type="GO" id="GO:0016491">
    <property type="term" value="F:oxidoreductase activity"/>
    <property type="evidence" value="ECO:0007669"/>
    <property type="project" value="UniProtKB-KW"/>
</dbReference>
<dbReference type="GO" id="GO:0016126">
    <property type="term" value="P:sterol biosynthetic process"/>
    <property type="evidence" value="ECO:0007669"/>
    <property type="project" value="UniProtKB-UniPathway"/>
</dbReference>
<dbReference type="InterPro" id="IPR006694">
    <property type="entry name" value="Fatty_acid_hydroxylase"/>
</dbReference>
<dbReference type="InterPro" id="IPR050307">
    <property type="entry name" value="Sterol_Desaturase_Related"/>
</dbReference>
<dbReference type="PANTHER" id="PTHR11863">
    <property type="entry name" value="STEROL DESATURASE"/>
    <property type="match status" value="1"/>
</dbReference>
<dbReference type="Pfam" id="PF04116">
    <property type="entry name" value="FA_hydroxylase"/>
    <property type="match status" value="1"/>
</dbReference>
<proteinExistence type="evidence at transcript level"/>